<reference key="1">
    <citation type="journal article" date="2005" name="Nature">
        <title>Genomic sequence of the pathogenic and allergenic filamentous fungus Aspergillus fumigatus.</title>
        <authorList>
            <person name="Nierman W.C."/>
            <person name="Pain A."/>
            <person name="Anderson M.J."/>
            <person name="Wortman J.R."/>
            <person name="Kim H.S."/>
            <person name="Arroyo J."/>
            <person name="Berriman M."/>
            <person name="Abe K."/>
            <person name="Archer D.B."/>
            <person name="Bermejo C."/>
            <person name="Bennett J.W."/>
            <person name="Bowyer P."/>
            <person name="Chen D."/>
            <person name="Collins M."/>
            <person name="Coulsen R."/>
            <person name="Davies R."/>
            <person name="Dyer P.S."/>
            <person name="Farman M.L."/>
            <person name="Fedorova N."/>
            <person name="Fedorova N.D."/>
            <person name="Feldblyum T.V."/>
            <person name="Fischer R."/>
            <person name="Fosker N."/>
            <person name="Fraser A."/>
            <person name="Garcia J.L."/>
            <person name="Garcia M.J."/>
            <person name="Goble A."/>
            <person name="Goldman G.H."/>
            <person name="Gomi K."/>
            <person name="Griffith-Jones S."/>
            <person name="Gwilliam R."/>
            <person name="Haas B.J."/>
            <person name="Haas H."/>
            <person name="Harris D.E."/>
            <person name="Horiuchi H."/>
            <person name="Huang J."/>
            <person name="Humphray S."/>
            <person name="Jimenez J."/>
            <person name="Keller N."/>
            <person name="Khouri H."/>
            <person name="Kitamoto K."/>
            <person name="Kobayashi T."/>
            <person name="Konzack S."/>
            <person name="Kulkarni R."/>
            <person name="Kumagai T."/>
            <person name="Lafton A."/>
            <person name="Latge J.-P."/>
            <person name="Li W."/>
            <person name="Lord A."/>
            <person name="Lu C."/>
            <person name="Majoros W.H."/>
            <person name="May G.S."/>
            <person name="Miller B.L."/>
            <person name="Mohamoud Y."/>
            <person name="Molina M."/>
            <person name="Monod M."/>
            <person name="Mouyna I."/>
            <person name="Mulligan S."/>
            <person name="Murphy L.D."/>
            <person name="O'Neil S."/>
            <person name="Paulsen I."/>
            <person name="Penalva M.A."/>
            <person name="Pertea M."/>
            <person name="Price C."/>
            <person name="Pritchard B.L."/>
            <person name="Quail M.A."/>
            <person name="Rabbinowitsch E."/>
            <person name="Rawlins N."/>
            <person name="Rajandream M.A."/>
            <person name="Reichard U."/>
            <person name="Renauld H."/>
            <person name="Robson G.D."/>
            <person name="Rodriguez de Cordoba S."/>
            <person name="Rodriguez-Pena J.M."/>
            <person name="Ronning C.M."/>
            <person name="Rutter S."/>
            <person name="Salzberg S.L."/>
            <person name="Sanchez M."/>
            <person name="Sanchez-Ferrero J.C."/>
            <person name="Saunders D."/>
            <person name="Seeger K."/>
            <person name="Squares R."/>
            <person name="Squares S."/>
            <person name="Takeuchi M."/>
            <person name="Tekaia F."/>
            <person name="Turner G."/>
            <person name="Vazquez de Aldana C.R."/>
            <person name="Weidman J."/>
            <person name="White O."/>
            <person name="Woodward J.R."/>
            <person name="Yu J.-H."/>
            <person name="Fraser C.M."/>
            <person name="Galagan J.E."/>
            <person name="Asai K."/>
            <person name="Machida M."/>
            <person name="Hall N."/>
            <person name="Barrell B.G."/>
            <person name="Denning D.W."/>
        </authorList>
    </citation>
    <scope>NUCLEOTIDE SEQUENCE [LARGE SCALE GENOMIC DNA]</scope>
    <source>
        <strain>ATCC MYA-4609 / CBS 101355 / FGSC A1100 / Af293</strain>
    </source>
</reference>
<organism>
    <name type="scientific">Aspergillus fumigatus (strain ATCC MYA-4609 / CBS 101355 / FGSC A1100 / Af293)</name>
    <name type="common">Neosartorya fumigata</name>
    <dbReference type="NCBI Taxonomy" id="330879"/>
    <lineage>
        <taxon>Eukaryota</taxon>
        <taxon>Fungi</taxon>
        <taxon>Dikarya</taxon>
        <taxon>Ascomycota</taxon>
        <taxon>Pezizomycotina</taxon>
        <taxon>Eurotiomycetes</taxon>
        <taxon>Eurotiomycetidae</taxon>
        <taxon>Eurotiales</taxon>
        <taxon>Aspergillaceae</taxon>
        <taxon>Aspergillus</taxon>
        <taxon>Aspergillus subgen. Fumigati</taxon>
    </lineage>
</organism>
<name>DDI1_ASPFU</name>
<proteinExistence type="inferred from homology"/>
<protein>
    <recommendedName>
        <fullName>DNA damage-inducible protein 1</fullName>
        <ecNumber evidence="2">3.4.23.-</ecNumber>
    </recommendedName>
</protein>
<dbReference type="EC" id="3.4.23.-" evidence="2"/>
<dbReference type="EMBL" id="AAHF01000009">
    <property type="protein sequence ID" value="EAL86867.1"/>
    <property type="molecule type" value="Genomic_DNA"/>
</dbReference>
<dbReference type="RefSeq" id="XP_748905.1">
    <property type="nucleotide sequence ID" value="XM_743812.1"/>
</dbReference>
<dbReference type="SMR" id="Q4WGS4"/>
<dbReference type="FunCoup" id="Q4WGS4">
    <property type="interactions" value="285"/>
</dbReference>
<dbReference type="STRING" id="330879.Q4WGS4"/>
<dbReference type="EnsemblFungi" id="EAL86867">
    <property type="protein sequence ID" value="EAL86867"/>
    <property type="gene ID" value="AFUA_7G06050"/>
</dbReference>
<dbReference type="GeneID" id="3506445"/>
<dbReference type="KEGG" id="afm:AFUA_7G06050"/>
<dbReference type="eggNOG" id="KOG0012">
    <property type="taxonomic scope" value="Eukaryota"/>
</dbReference>
<dbReference type="HOGENOM" id="CLU_020435_2_0_1"/>
<dbReference type="InParanoid" id="Q4WGS4"/>
<dbReference type="OMA" id="GHRLNAF"/>
<dbReference type="OrthoDB" id="1047367at2759"/>
<dbReference type="Proteomes" id="UP000002530">
    <property type="component" value="Chromosome 7"/>
</dbReference>
<dbReference type="GO" id="GO:0005737">
    <property type="term" value="C:cytoplasm"/>
    <property type="evidence" value="ECO:0007669"/>
    <property type="project" value="UniProtKB-SubCell"/>
</dbReference>
<dbReference type="GO" id="GO:0004190">
    <property type="term" value="F:aspartic-type endopeptidase activity"/>
    <property type="evidence" value="ECO:0007669"/>
    <property type="project" value="UniProtKB-KW"/>
</dbReference>
<dbReference type="GO" id="GO:0015031">
    <property type="term" value="P:protein transport"/>
    <property type="evidence" value="ECO:0007669"/>
    <property type="project" value="UniProtKB-KW"/>
</dbReference>
<dbReference type="GO" id="GO:0006508">
    <property type="term" value="P:proteolysis"/>
    <property type="evidence" value="ECO:0007669"/>
    <property type="project" value="UniProtKB-KW"/>
</dbReference>
<dbReference type="CDD" id="cd05479">
    <property type="entry name" value="RP_DDI"/>
    <property type="match status" value="1"/>
</dbReference>
<dbReference type="CDD" id="cd01796">
    <property type="entry name" value="Ubl_Ddi1_like"/>
    <property type="match status" value="1"/>
</dbReference>
<dbReference type="Gene3D" id="2.40.70.10">
    <property type="entry name" value="Acid Proteases"/>
    <property type="match status" value="1"/>
</dbReference>
<dbReference type="Gene3D" id="1.10.8.10">
    <property type="entry name" value="DNA helicase RuvA subunit, C-terminal domain"/>
    <property type="match status" value="1"/>
</dbReference>
<dbReference type="Gene3D" id="3.10.20.90">
    <property type="entry name" value="Phosphatidylinositol 3-kinase Catalytic Subunit, Chain A, domain 1"/>
    <property type="match status" value="1"/>
</dbReference>
<dbReference type="InterPro" id="IPR033882">
    <property type="entry name" value="DDI1_N"/>
</dbReference>
<dbReference type="InterPro" id="IPR019103">
    <property type="entry name" value="Peptidase_aspartic_DDI1-type"/>
</dbReference>
<dbReference type="InterPro" id="IPR021109">
    <property type="entry name" value="Peptidase_aspartic_dom_sf"/>
</dbReference>
<dbReference type="InterPro" id="IPR015940">
    <property type="entry name" value="UBA"/>
</dbReference>
<dbReference type="InterPro" id="IPR009060">
    <property type="entry name" value="UBA-like_sf"/>
</dbReference>
<dbReference type="InterPro" id="IPR000626">
    <property type="entry name" value="Ubiquitin-like_dom"/>
</dbReference>
<dbReference type="InterPro" id="IPR029071">
    <property type="entry name" value="Ubiquitin-like_domsf"/>
</dbReference>
<dbReference type="PANTHER" id="PTHR12917">
    <property type="entry name" value="ASPARTYL PROTEASE DDI-RELATED"/>
    <property type="match status" value="1"/>
</dbReference>
<dbReference type="PANTHER" id="PTHR12917:SF1">
    <property type="entry name" value="AT13091P"/>
    <property type="match status" value="1"/>
</dbReference>
<dbReference type="Pfam" id="PF09668">
    <property type="entry name" value="Asp_protease"/>
    <property type="match status" value="1"/>
</dbReference>
<dbReference type="Pfam" id="PF24669">
    <property type="entry name" value="Ddi2_HDD"/>
    <property type="match status" value="1"/>
</dbReference>
<dbReference type="Pfam" id="PF00627">
    <property type="entry name" value="UBA"/>
    <property type="match status" value="1"/>
</dbReference>
<dbReference type="Pfam" id="PF00240">
    <property type="entry name" value="ubiquitin"/>
    <property type="match status" value="1"/>
</dbReference>
<dbReference type="SMART" id="SM00165">
    <property type="entry name" value="UBA"/>
    <property type="match status" value="1"/>
</dbReference>
<dbReference type="SUPFAM" id="SSF50630">
    <property type="entry name" value="Acid proteases"/>
    <property type="match status" value="1"/>
</dbReference>
<dbReference type="SUPFAM" id="SSF46934">
    <property type="entry name" value="UBA-like"/>
    <property type="match status" value="1"/>
</dbReference>
<dbReference type="SUPFAM" id="SSF54236">
    <property type="entry name" value="Ubiquitin-like"/>
    <property type="match status" value="1"/>
</dbReference>
<dbReference type="PROSITE" id="PS50030">
    <property type="entry name" value="UBA"/>
    <property type="match status" value="1"/>
</dbReference>
<dbReference type="PROSITE" id="PS50053">
    <property type="entry name" value="UBIQUITIN_2"/>
    <property type="match status" value="1"/>
</dbReference>
<keyword id="KW-0064">Aspartyl protease</keyword>
<keyword id="KW-0963">Cytoplasm</keyword>
<keyword id="KW-0378">Hydrolase</keyword>
<keyword id="KW-0645">Protease</keyword>
<keyword id="KW-0653">Protein transport</keyword>
<keyword id="KW-1185">Reference proteome</keyword>
<keyword id="KW-0813">Transport</keyword>
<feature type="chain" id="PRO_0000285306" description="DNA damage-inducible protein 1">
    <location>
        <begin position="1"/>
        <end position="405"/>
    </location>
</feature>
<feature type="domain" description="Ubiquitin-like" evidence="5">
    <location>
        <begin position="1"/>
        <end position="57"/>
    </location>
</feature>
<feature type="domain" description="UBA" evidence="4">
    <location>
        <begin position="367"/>
        <end position="405"/>
    </location>
</feature>
<feature type="region of interest" description="Disordered" evidence="6">
    <location>
        <begin position="57"/>
        <end position="87"/>
    </location>
</feature>
<feature type="region of interest" description="Disordered" evidence="6">
    <location>
        <begin position="337"/>
        <end position="369"/>
    </location>
</feature>
<feature type="compositionally biased region" description="Polar residues" evidence="6">
    <location>
        <begin position="71"/>
        <end position="80"/>
    </location>
</feature>
<feature type="compositionally biased region" description="Low complexity" evidence="6">
    <location>
        <begin position="341"/>
        <end position="356"/>
    </location>
</feature>
<feature type="active site" evidence="7">
    <location>
        <position position="204"/>
    </location>
</feature>
<evidence type="ECO:0000250" key="1"/>
<evidence type="ECO:0000250" key="2">
    <source>
        <dbReference type="UniProtKB" id="I7HUG0"/>
    </source>
</evidence>
<evidence type="ECO:0000250" key="3">
    <source>
        <dbReference type="UniProtKB" id="P40087"/>
    </source>
</evidence>
<evidence type="ECO:0000255" key="4">
    <source>
        <dbReference type="PROSITE-ProRule" id="PRU00212"/>
    </source>
</evidence>
<evidence type="ECO:0000255" key="5">
    <source>
        <dbReference type="PROSITE-ProRule" id="PRU00214"/>
    </source>
</evidence>
<evidence type="ECO:0000256" key="6">
    <source>
        <dbReference type="SAM" id="MobiDB-lite"/>
    </source>
</evidence>
<evidence type="ECO:0000305" key="7"/>
<gene>
    <name type="primary">ddi1</name>
    <name type="ORF">AFUA_7G06050</name>
</gene>
<sequence>MTVELLKAIVESETSIPTNNQRLVYNNQLLGNDAQTLEQIGIGEGDMLGVHVTMRSPQAPARSIGGGPSAAAQQNLQRRQPMTPDPETIRLHILGDPRVREAVRRQNPELADAATDAQRFRDVLMAQQRREAQMEAEKEARIAMLNADPFNPENQREIEEIIRQNAVTENLHTAMEHHPESFGRVTMLYIPVEVNGHKVNAFVDSGAQVTIMSPECATACNIMRLVDRRYGGIAKGVGTATILGRVHSAQIKIGSMFLPCSFTVMEGKHIDLLLGLDMLKRHQACIDLKKGALVIQDEAVPFLGEADIPKELQEGFEDEPIVKGADGAEVGARTGAVTHQASGSGTSAAAPSSSTPRTNIRPAPSSRWPQDSIAKITELGFTREEAVRALDAANGDLDGAIGFLI</sequence>
<comment type="function">
    <text evidence="2 3">Probable aspartic protease. May be involved in the regulation of exocytosis. Acts as a linker between the 19S proteasome and polyubiquitinated proteins via UBA domain interactions with ubiquitin for their subsequent degradation. Required for S-phase checkpoint control.</text>
</comment>
<comment type="subunit">
    <text evidence="1">Binds ubiquitin and polyubiquitinated proteins.</text>
</comment>
<comment type="subcellular location">
    <subcellularLocation>
        <location evidence="1">Cytoplasm</location>
    </subcellularLocation>
</comment>
<comment type="similarity">
    <text evidence="7">Belongs to the DDI1 family.</text>
</comment>
<accession>Q4WGS4</accession>